<accession>B3R7F2</accession>
<protein>
    <recommendedName>
        <fullName evidence="1">Large ribosomal subunit protein uL18</fullName>
    </recommendedName>
    <alternativeName>
        <fullName evidence="2">50S ribosomal protein L18</fullName>
    </alternativeName>
</protein>
<organism>
    <name type="scientific">Cupriavidus taiwanensis (strain DSM 17343 / BCRC 17206 / CCUG 44338 / CIP 107171 / LMG 19424 / R1)</name>
    <name type="common">Ralstonia taiwanensis (strain LMG 19424)</name>
    <dbReference type="NCBI Taxonomy" id="977880"/>
    <lineage>
        <taxon>Bacteria</taxon>
        <taxon>Pseudomonadati</taxon>
        <taxon>Pseudomonadota</taxon>
        <taxon>Betaproteobacteria</taxon>
        <taxon>Burkholderiales</taxon>
        <taxon>Burkholderiaceae</taxon>
        <taxon>Cupriavidus</taxon>
    </lineage>
</organism>
<gene>
    <name evidence="1" type="primary">rplR</name>
    <name type="ordered locus">RALTA_A2927</name>
</gene>
<name>RL18_CUPTR</name>
<feature type="chain" id="PRO_1000142648" description="Large ribosomal subunit protein uL18">
    <location>
        <begin position="1"/>
        <end position="119"/>
    </location>
</feature>
<keyword id="KW-0687">Ribonucleoprotein</keyword>
<keyword id="KW-0689">Ribosomal protein</keyword>
<keyword id="KW-0694">RNA-binding</keyword>
<keyword id="KW-0699">rRNA-binding</keyword>
<comment type="function">
    <text evidence="1">This is one of the proteins that bind and probably mediate the attachment of the 5S RNA into the large ribosomal subunit, where it forms part of the central protuberance.</text>
</comment>
<comment type="subunit">
    <text evidence="1">Part of the 50S ribosomal subunit; part of the 5S rRNA/L5/L18/L25 subcomplex. Contacts the 5S and 23S rRNAs.</text>
</comment>
<comment type="similarity">
    <text evidence="1">Belongs to the universal ribosomal protein uL18 family.</text>
</comment>
<sequence>MMNKKDARLRRARQTRAKIAELKVNRLTVFRTNSNIYAQVFSECGTKVLASASTVEAEVRKELEGKGATAAAATVVGKRIAEKAKAAGVETVAFDRAGFRFHGRVKALADAAREAGLKF</sequence>
<dbReference type="EMBL" id="CU633749">
    <property type="protein sequence ID" value="CAQ70852.1"/>
    <property type="molecule type" value="Genomic_DNA"/>
</dbReference>
<dbReference type="SMR" id="B3R7F2"/>
<dbReference type="KEGG" id="cti:RALTA_A2927"/>
<dbReference type="eggNOG" id="COG0256">
    <property type="taxonomic scope" value="Bacteria"/>
</dbReference>
<dbReference type="HOGENOM" id="CLU_098841_0_1_4"/>
<dbReference type="Proteomes" id="UP000001692">
    <property type="component" value="Chromosome 1"/>
</dbReference>
<dbReference type="GO" id="GO:0022625">
    <property type="term" value="C:cytosolic large ribosomal subunit"/>
    <property type="evidence" value="ECO:0007669"/>
    <property type="project" value="TreeGrafter"/>
</dbReference>
<dbReference type="GO" id="GO:0008097">
    <property type="term" value="F:5S rRNA binding"/>
    <property type="evidence" value="ECO:0007669"/>
    <property type="project" value="TreeGrafter"/>
</dbReference>
<dbReference type="GO" id="GO:0003735">
    <property type="term" value="F:structural constituent of ribosome"/>
    <property type="evidence" value="ECO:0007669"/>
    <property type="project" value="InterPro"/>
</dbReference>
<dbReference type="GO" id="GO:0006412">
    <property type="term" value="P:translation"/>
    <property type="evidence" value="ECO:0007669"/>
    <property type="project" value="UniProtKB-UniRule"/>
</dbReference>
<dbReference type="CDD" id="cd00432">
    <property type="entry name" value="Ribosomal_L18_L5e"/>
    <property type="match status" value="1"/>
</dbReference>
<dbReference type="FunFam" id="3.30.420.100:FF:000001">
    <property type="entry name" value="50S ribosomal protein L18"/>
    <property type="match status" value="1"/>
</dbReference>
<dbReference type="Gene3D" id="3.30.420.100">
    <property type="match status" value="1"/>
</dbReference>
<dbReference type="HAMAP" id="MF_01337_B">
    <property type="entry name" value="Ribosomal_uL18_B"/>
    <property type="match status" value="1"/>
</dbReference>
<dbReference type="InterPro" id="IPR004389">
    <property type="entry name" value="Ribosomal_uL18_bac-type"/>
</dbReference>
<dbReference type="InterPro" id="IPR005484">
    <property type="entry name" value="Ribosomal_uL18_bac/euk"/>
</dbReference>
<dbReference type="NCBIfam" id="TIGR00060">
    <property type="entry name" value="L18_bact"/>
    <property type="match status" value="1"/>
</dbReference>
<dbReference type="PANTHER" id="PTHR12899">
    <property type="entry name" value="39S RIBOSOMAL PROTEIN L18, MITOCHONDRIAL"/>
    <property type="match status" value="1"/>
</dbReference>
<dbReference type="PANTHER" id="PTHR12899:SF3">
    <property type="entry name" value="LARGE RIBOSOMAL SUBUNIT PROTEIN UL18M"/>
    <property type="match status" value="1"/>
</dbReference>
<dbReference type="Pfam" id="PF00861">
    <property type="entry name" value="Ribosomal_L18p"/>
    <property type="match status" value="1"/>
</dbReference>
<dbReference type="SUPFAM" id="SSF53137">
    <property type="entry name" value="Translational machinery components"/>
    <property type="match status" value="1"/>
</dbReference>
<evidence type="ECO:0000255" key="1">
    <source>
        <dbReference type="HAMAP-Rule" id="MF_01337"/>
    </source>
</evidence>
<evidence type="ECO:0000305" key="2"/>
<proteinExistence type="inferred from homology"/>
<reference key="1">
    <citation type="journal article" date="2008" name="Genome Res.">
        <title>Genome sequence of the beta-rhizobium Cupriavidus taiwanensis and comparative genomics of rhizobia.</title>
        <authorList>
            <person name="Amadou C."/>
            <person name="Pascal G."/>
            <person name="Mangenot S."/>
            <person name="Glew M."/>
            <person name="Bontemps C."/>
            <person name="Capela D."/>
            <person name="Carrere S."/>
            <person name="Cruveiller S."/>
            <person name="Dossat C."/>
            <person name="Lajus A."/>
            <person name="Marchetti M."/>
            <person name="Poinsot V."/>
            <person name="Rouy Z."/>
            <person name="Servin B."/>
            <person name="Saad M."/>
            <person name="Schenowitz C."/>
            <person name="Barbe V."/>
            <person name="Batut J."/>
            <person name="Medigue C."/>
            <person name="Masson-Boivin C."/>
        </authorList>
    </citation>
    <scope>NUCLEOTIDE SEQUENCE [LARGE SCALE GENOMIC DNA]</scope>
    <source>
        <strain>DSM 17343 / BCRC 17206 / CCUG 44338 / CIP 107171 / LMG 19424 / R1</strain>
    </source>
</reference>